<name>FADA_CITK8</name>
<dbReference type="EC" id="2.3.1.16" evidence="1"/>
<dbReference type="EMBL" id="CP000822">
    <property type="protein sequence ID" value="ABV11356.1"/>
    <property type="molecule type" value="Genomic_DNA"/>
</dbReference>
<dbReference type="RefSeq" id="WP_012131190.1">
    <property type="nucleotide sequence ID" value="NC_009792.1"/>
</dbReference>
<dbReference type="SMR" id="A8ACZ3"/>
<dbReference type="STRING" id="290338.CKO_00187"/>
<dbReference type="GeneID" id="45134477"/>
<dbReference type="KEGG" id="cko:CKO_00187"/>
<dbReference type="HOGENOM" id="CLU_031026_2_3_6"/>
<dbReference type="OrthoDB" id="9764638at2"/>
<dbReference type="UniPathway" id="UPA00659"/>
<dbReference type="Proteomes" id="UP000008148">
    <property type="component" value="Chromosome"/>
</dbReference>
<dbReference type="GO" id="GO:0005737">
    <property type="term" value="C:cytoplasm"/>
    <property type="evidence" value="ECO:0007669"/>
    <property type="project" value="UniProtKB-SubCell"/>
</dbReference>
<dbReference type="GO" id="GO:0003988">
    <property type="term" value="F:acetyl-CoA C-acyltransferase activity"/>
    <property type="evidence" value="ECO:0007669"/>
    <property type="project" value="UniProtKB-UniRule"/>
</dbReference>
<dbReference type="GO" id="GO:0006635">
    <property type="term" value="P:fatty acid beta-oxidation"/>
    <property type="evidence" value="ECO:0007669"/>
    <property type="project" value="UniProtKB-UniRule"/>
</dbReference>
<dbReference type="GO" id="GO:0010124">
    <property type="term" value="P:phenylacetate catabolic process"/>
    <property type="evidence" value="ECO:0007669"/>
    <property type="project" value="TreeGrafter"/>
</dbReference>
<dbReference type="CDD" id="cd00751">
    <property type="entry name" value="thiolase"/>
    <property type="match status" value="1"/>
</dbReference>
<dbReference type="FunFam" id="3.40.47.10:FF:000010">
    <property type="entry name" value="Acetyl-CoA acetyltransferase (Thiolase)"/>
    <property type="match status" value="1"/>
</dbReference>
<dbReference type="Gene3D" id="3.40.47.10">
    <property type="match status" value="2"/>
</dbReference>
<dbReference type="HAMAP" id="MF_01620">
    <property type="entry name" value="FadA"/>
    <property type="match status" value="1"/>
</dbReference>
<dbReference type="InterPro" id="IPR012805">
    <property type="entry name" value="FadA"/>
</dbReference>
<dbReference type="InterPro" id="IPR002155">
    <property type="entry name" value="Thiolase"/>
</dbReference>
<dbReference type="InterPro" id="IPR016039">
    <property type="entry name" value="Thiolase-like"/>
</dbReference>
<dbReference type="InterPro" id="IPR050215">
    <property type="entry name" value="Thiolase-like_sf_Thiolase"/>
</dbReference>
<dbReference type="InterPro" id="IPR020615">
    <property type="entry name" value="Thiolase_acyl_enz_int_AS"/>
</dbReference>
<dbReference type="InterPro" id="IPR020610">
    <property type="entry name" value="Thiolase_AS"/>
</dbReference>
<dbReference type="InterPro" id="IPR020617">
    <property type="entry name" value="Thiolase_C"/>
</dbReference>
<dbReference type="InterPro" id="IPR020613">
    <property type="entry name" value="Thiolase_CS"/>
</dbReference>
<dbReference type="InterPro" id="IPR020616">
    <property type="entry name" value="Thiolase_N"/>
</dbReference>
<dbReference type="NCBIfam" id="TIGR01930">
    <property type="entry name" value="AcCoA-C-Actrans"/>
    <property type="match status" value="1"/>
</dbReference>
<dbReference type="NCBIfam" id="TIGR02445">
    <property type="entry name" value="fadA"/>
    <property type="match status" value="1"/>
</dbReference>
<dbReference type="NCBIfam" id="NF006510">
    <property type="entry name" value="PRK08947.1"/>
    <property type="match status" value="1"/>
</dbReference>
<dbReference type="PANTHER" id="PTHR43853:SF11">
    <property type="entry name" value="3-KETOACYL-COA THIOLASE FADA"/>
    <property type="match status" value="1"/>
</dbReference>
<dbReference type="PANTHER" id="PTHR43853">
    <property type="entry name" value="3-KETOACYL-COA THIOLASE, PEROXISOMAL"/>
    <property type="match status" value="1"/>
</dbReference>
<dbReference type="Pfam" id="PF02803">
    <property type="entry name" value="Thiolase_C"/>
    <property type="match status" value="1"/>
</dbReference>
<dbReference type="Pfam" id="PF00108">
    <property type="entry name" value="Thiolase_N"/>
    <property type="match status" value="1"/>
</dbReference>
<dbReference type="PIRSF" id="PIRSF000429">
    <property type="entry name" value="Ac-CoA_Ac_transf"/>
    <property type="match status" value="1"/>
</dbReference>
<dbReference type="SUPFAM" id="SSF53901">
    <property type="entry name" value="Thiolase-like"/>
    <property type="match status" value="2"/>
</dbReference>
<dbReference type="PROSITE" id="PS00098">
    <property type="entry name" value="THIOLASE_1"/>
    <property type="match status" value="1"/>
</dbReference>
<dbReference type="PROSITE" id="PS00737">
    <property type="entry name" value="THIOLASE_2"/>
    <property type="match status" value="1"/>
</dbReference>
<dbReference type="PROSITE" id="PS00099">
    <property type="entry name" value="THIOLASE_3"/>
    <property type="match status" value="1"/>
</dbReference>
<gene>
    <name evidence="1" type="primary">fadA</name>
    <name type="ordered locus">CKO_00187</name>
</gene>
<evidence type="ECO:0000255" key="1">
    <source>
        <dbReference type="HAMAP-Rule" id="MF_01620"/>
    </source>
</evidence>
<sequence length="389" mass="41192">MEQVVIVDAIRTPMGRSKGGAFRNVRAEDLSAHLMRSLLARNPALEATAIDDIYWGCVQQTLEQGFNIARNAALLAEIPHSVPAVTVNRLCGSSMQALHDAARMIMTGDAQTCLIGGVEHMGHVPMSHGVDFHPGLSRNVAKAAGMMGLTAEMLSRMHGISREMQDAFAARSHARAWAATQSGAFKNEIIPTGGHDADGVLKQFSYDEVIRPETTVEALSTLRPAFDPVSGTVTAGTSSALSDGAAAMLVMSESRARELGLQPRARIRSMAVVGCDPSIMGYGPVPASKLALKKAGLAASDIDLFEMNEAFAAQILPCIKDLGLMEQIDEKINLNGGAIALGHPLGCSGARISTTLLNLMERKDAQFGLATMCIGLGQGIATVFERVQS</sequence>
<reference key="1">
    <citation type="submission" date="2007-08" db="EMBL/GenBank/DDBJ databases">
        <authorList>
            <consortium name="The Citrobacter koseri Genome Sequencing Project"/>
            <person name="McClelland M."/>
            <person name="Sanderson E.K."/>
            <person name="Porwollik S."/>
            <person name="Spieth J."/>
            <person name="Clifton W.S."/>
            <person name="Latreille P."/>
            <person name="Courtney L."/>
            <person name="Wang C."/>
            <person name="Pepin K."/>
            <person name="Bhonagiri V."/>
            <person name="Nash W."/>
            <person name="Johnson M."/>
            <person name="Thiruvilangam P."/>
            <person name="Wilson R."/>
        </authorList>
    </citation>
    <scope>NUCLEOTIDE SEQUENCE [LARGE SCALE GENOMIC DNA]</scope>
    <source>
        <strain>ATCC BAA-895 / CDC 4225-83 / SGSC4696</strain>
    </source>
</reference>
<keyword id="KW-0012">Acyltransferase</keyword>
<keyword id="KW-0963">Cytoplasm</keyword>
<keyword id="KW-0276">Fatty acid metabolism</keyword>
<keyword id="KW-0442">Lipid degradation</keyword>
<keyword id="KW-0443">Lipid metabolism</keyword>
<keyword id="KW-1185">Reference proteome</keyword>
<keyword id="KW-0808">Transferase</keyword>
<organism>
    <name type="scientific">Citrobacter koseri (strain ATCC BAA-895 / CDC 4225-83 / SGSC4696)</name>
    <dbReference type="NCBI Taxonomy" id="290338"/>
    <lineage>
        <taxon>Bacteria</taxon>
        <taxon>Pseudomonadati</taxon>
        <taxon>Pseudomonadota</taxon>
        <taxon>Gammaproteobacteria</taxon>
        <taxon>Enterobacterales</taxon>
        <taxon>Enterobacteriaceae</taxon>
        <taxon>Citrobacter</taxon>
    </lineage>
</organism>
<protein>
    <recommendedName>
        <fullName evidence="1">3-ketoacyl-CoA thiolase</fullName>
        <ecNumber evidence="1">2.3.1.16</ecNumber>
    </recommendedName>
    <alternativeName>
        <fullName evidence="1">Acetyl-CoA acyltransferase</fullName>
    </alternativeName>
    <alternativeName>
        <fullName evidence="1">Beta-ketothiolase</fullName>
    </alternativeName>
    <alternativeName>
        <fullName evidence="1">Fatty acid oxidation complex subunit beta</fullName>
    </alternativeName>
</protein>
<proteinExistence type="inferred from homology"/>
<feature type="chain" id="PRO_0000323542" description="3-ketoacyl-CoA thiolase">
    <location>
        <begin position="1"/>
        <end position="389"/>
    </location>
</feature>
<feature type="active site" description="Acyl-thioester intermediate" evidence="1">
    <location>
        <position position="91"/>
    </location>
</feature>
<feature type="active site" description="Proton acceptor" evidence="1">
    <location>
        <position position="343"/>
    </location>
</feature>
<feature type="active site" description="Proton acceptor" evidence="1">
    <location>
        <position position="373"/>
    </location>
</feature>
<accession>A8ACZ3</accession>
<comment type="function">
    <text evidence="1">Catalyzes the final step of fatty acid oxidation in which acetyl-CoA is released and the CoA ester of a fatty acid two carbons shorter is formed.</text>
</comment>
<comment type="catalytic activity">
    <reaction evidence="1">
        <text>an acyl-CoA + acetyl-CoA = a 3-oxoacyl-CoA + CoA</text>
        <dbReference type="Rhea" id="RHEA:21564"/>
        <dbReference type="ChEBI" id="CHEBI:57287"/>
        <dbReference type="ChEBI" id="CHEBI:57288"/>
        <dbReference type="ChEBI" id="CHEBI:58342"/>
        <dbReference type="ChEBI" id="CHEBI:90726"/>
        <dbReference type="EC" id="2.3.1.16"/>
    </reaction>
</comment>
<comment type="pathway">
    <text evidence="1">Lipid metabolism; fatty acid beta-oxidation.</text>
</comment>
<comment type="subunit">
    <text evidence="1">Heterotetramer of two alpha chains (FadB) and two beta chains (FadA).</text>
</comment>
<comment type="subcellular location">
    <subcellularLocation>
        <location evidence="1">Cytoplasm</location>
    </subcellularLocation>
</comment>
<comment type="similarity">
    <text evidence="1">Belongs to the thiolase-like superfamily. Thiolase family.</text>
</comment>